<feature type="initiator methionine" description="Removed" evidence="1">
    <location>
        <position position="1"/>
    </location>
</feature>
<feature type="chain" id="PRO_0000139161" description="Methionine--tRNA ligase">
    <location>
        <begin position="2"/>
        <end position="677"/>
    </location>
</feature>
<feature type="domain" description="tRNA-binding" evidence="2">
    <location>
        <begin position="575"/>
        <end position="677"/>
    </location>
</feature>
<feature type="short sequence motif" description="'HIGH' region">
    <location>
        <begin position="15"/>
        <end position="25"/>
    </location>
</feature>
<feature type="short sequence motif" description="'KMSKS' region">
    <location>
        <begin position="333"/>
        <end position="337"/>
    </location>
</feature>
<feature type="binding site" evidence="2">
    <location>
        <position position="146"/>
    </location>
    <ligand>
        <name>Zn(2+)</name>
        <dbReference type="ChEBI" id="CHEBI:29105"/>
    </ligand>
</feature>
<feature type="binding site" evidence="2">
    <location>
        <position position="149"/>
    </location>
    <ligand>
        <name>Zn(2+)</name>
        <dbReference type="ChEBI" id="CHEBI:29105"/>
    </ligand>
</feature>
<feature type="binding site" evidence="2">
    <location>
        <position position="159"/>
    </location>
    <ligand>
        <name>Zn(2+)</name>
        <dbReference type="ChEBI" id="CHEBI:29105"/>
    </ligand>
</feature>
<feature type="binding site" evidence="2">
    <location>
        <position position="162"/>
    </location>
    <ligand>
        <name>Zn(2+)</name>
        <dbReference type="ChEBI" id="CHEBI:29105"/>
    </ligand>
</feature>
<feature type="binding site" evidence="2">
    <location>
        <position position="336"/>
    </location>
    <ligand>
        <name>ATP</name>
        <dbReference type="ChEBI" id="CHEBI:30616"/>
    </ligand>
</feature>
<feature type="sequence conflict" description="In Ref. 2; AAO68398." evidence="3" ref="2">
    <original>D</original>
    <variation>N</variation>
    <location>
        <position position="667"/>
    </location>
</feature>
<organism>
    <name type="scientific">Salmonella typhi</name>
    <dbReference type="NCBI Taxonomy" id="90370"/>
    <lineage>
        <taxon>Bacteria</taxon>
        <taxon>Pseudomonadati</taxon>
        <taxon>Pseudomonadota</taxon>
        <taxon>Gammaproteobacteria</taxon>
        <taxon>Enterobacterales</taxon>
        <taxon>Enterobacteriaceae</taxon>
        <taxon>Salmonella</taxon>
    </lineage>
</organism>
<sequence>MTQVAKKILVTCALPYANGSIHLGHMLEHIQADVWVRYQRMRGHEVNFICADDAHGTPIMLKAQQLGITPEQMIGEMSQEHQTDFAGFNISYDNYHSTHSDENRELSELIYTRLKENGFIKNRTISQLYDPEKGMFLPDRFVKGTCPKCKSADQYGDNCEVCGATYSPTELIEPKSVVSGATPVMRDSEHFFFDLPSFSEMLQAWTRSGALQEQVANKMQEWFESGLQQWDISRDAPYFGFEIPNAPGKYFYVWLDAPIGYMGSFKNLCDKRGDTTSFDEYWKKDSDAELYHFIGKDIVYFHSLFWPAMLEGSHFRKPTNLFVHGYVTVNGAKMSKSRGTFIKASTWLKHFDADSLRYYYTAKLSSRIDDIDLNLEDFVQRVNADIVNKVVNLASRNAGFINKRFDGVLAAELADPQLYKTFTDAAAVIGEAWESREFGKAIREIMALADVANRYVDEQAPWVVAKQEGRDADLQAICSMGINLFRVLMTYLKPVLPTLSERVEAFLNSELNWDAIEQPLLSHKVNTFKALYNRIDMKQVEALVEASKEEVKAAAAPVTGPLADFPIQETITFDDFAKIDLRVALIENAEFVDGSDKLLRLTLDLGGEKRNVFSGIRSAYPDPQALIGRQTVMVANLAPRKMRFGVSEGMVMAAGPGGKDIFLLSPDDGAKPGQQVK</sequence>
<keyword id="KW-0030">Aminoacyl-tRNA synthetase</keyword>
<keyword id="KW-0067">ATP-binding</keyword>
<keyword id="KW-0963">Cytoplasm</keyword>
<keyword id="KW-0436">Ligase</keyword>
<keyword id="KW-0479">Metal-binding</keyword>
<keyword id="KW-0547">Nucleotide-binding</keyword>
<keyword id="KW-0648">Protein biosynthesis</keyword>
<keyword id="KW-0694">RNA-binding</keyword>
<keyword id="KW-0820">tRNA-binding</keyword>
<keyword id="KW-0862">Zinc</keyword>
<reference key="1">
    <citation type="journal article" date="2001" name="Nature">
        <title>Complete genome sequence of a multiple drug resistant Salmonella enterica serovar Typhi CT18.</title>
        <authorList>
            <person name="Parkhill J."/>
            <person name="Dougan G."/>
            <person name="James K.D."/>
            <person name="Thomson N.R."/>
            <person name="Pickard D."/>
            <person name="Wain J."/>
            <person name="Churcher C.M."/>
            <person name="Mungall K.L."/>
            <person name="Bentley S.D."/>
            <person name="Holden M.T.G."/>
            <person name="Sebaihia M."/>
            <person name="Baker S."/>
            <person name="Basham D."/>
            <person name="Brooks K."/>
            <person name="Chillingworth T."/>
            <person name="Connerton P."/>
            <person name="Cronin A."/>
            <person name="Davis P."/>
            <person name="Davies R.M."/>
            <person name="Dowd L."/>
            <person name="White N."/>
            <person name="Farrar J."/>
            <person name="Feltwell T."/>
            <person name="Hamlin N."/>
            <person name="Haque A."/>
            <person name="Hien T.T."/>
            <person name="Holroyd S."/>
            <person name="Jagels K."/>
            <person name="Krogh A."/>
            <person name="Larsen T.S."/>
            <person name="Leather S."/>
            <person name="Moule S."/>
            <person name="O'Gaora P."/>
            <person name="Parry C."/>
            <person name="Quail M.A."/>
            <person name="Rutherford K.M."/>
            <person name="Simmonds M."/>
            <person name="Skelton J."/>
            <person name="Stevens K."/>
            <person name="Whitehead S."/>
            <person name="Barrell B.G."/>
        </authorList>
    </citation>
    <scope>NUCLEOTIDE SEQUENCE [LARGE SCALE GENOMIC DNA]</scope>
    <source>
        <strain>CT18</strain>
    </source>
</reference>
<reference key="2">
    <citation type="journal article" date="2003" name="J. Bacteriol.">
        <title>Comparative genomics of Salmonella enterica serovar Typhi strains Ty2 and CT18.</title>
        <authorList>
            <person name="Deng W."/>
            <person name="Liou S.-R."/>
            <person name="Plunkett G. III"/>
            <person name="Mayhew G.F."/>
            <person name="Rose D.J."/>
            <person name="Burland V."/>
            <person name="Kodoyianni V."/>
            <person name="Schwartz D.C."/>
            <person name="Blattner F.R."/>
        </authorList>
    </citation>
    <scope>NUCLEOTIDE SEQUENCE [LARGE SCALE GENOMIC DNA]</scope>
    <source>
        <strain>ATCC 700931 / Ty2</strain>
    </source>
</reference>
<proteinExistence type="inferred from homology"/>
<accession>Q8Z5C3</accession>
<protein>
    <recommendedName>
        <fullName evidence="2">Methionine--tRNA ligase</fullName>
        <ecNumber evidence="2">6.1.1.10</ecNumber>
    </recommendedName>
    <alternativeName>
        <fullName evidence="2">Methionyl-tRNA synthetase</fullName>
        <shortName evidence="2">MetRS</shortName>
    </alternativeName>
</protein>
<gene>
    <name evidence="2" type="primary">metG</name>
    <name type="ordered locus">STY2384</name>
    <name type="ordered locus">t0701</name>
</gene>
<evidence type="ECO:0000250" key="1"/>
<evidence type="ECO:0000255" key="2">
    <source>
        <dbReference type="HAMAP-Rule" id="MF_00098"/>
    </source>
</evidence>
<evidence type="ECO:0000305" key="3"/>
<comment type="function">
    <text evidence="2">Is required not only for elongation of protein synthesis but also for the initiation of all mRNA translation through initiator tRNA(fMet) aminoacylation.</text>
</comment>
<comment type="catalytic activity">
    <reaction evidence="2">
        <text>tRNA(Met) + L-methionine + ATP = L-methionyl-tRNA(Met) + AMP + diphosphate</text>
        <dbReference type="Rhea" id="RHEA:13481"/>
        <dbReference type="Rhea" id="RHEA-COMP:9667"/>
        <dbReference type="Rhea" id="RHEA-COMP:9698"/>
        <dbReference type="ChEBI" id="CHEBI:30616"/>
        <dbReference type="ChEBI" id="CHEBI:33019"/>
        <dbReference type="ChEBI" id="CHEBI:57844"/>
        <dbReference type="ChEBI" id="CHEBI:78442"/>
        <dbReference type="ChEBI" id="CHEBI:78530"/>
        <dbReference type="ChEBI" id="CHEBI:456215"/>
        <dbReference type="EC" id="6.1.1.10"/>
    </reaction>
</comment>
<comment type="cofactor">
    <cofactor evidence="2">
        <name>Zn(2+)</name>
        <dbReference type="ChEBI" id="CHEBI:29105"/>
    </cofactor>
    <text evidence="2">Binds 1 zinc ion per subunit.</text>
</comment>
<comment type="subunit">
    <text evidence="2">Homodimer.</text>
</comment>
<comment type="subcellular location">
    <subcellularLocation>
        <location evidence="2">Cytoplasm</location>
    </subcellularLocation>
</comment>
<comment type="similarity">
    <text evidence="2">Belongs to the class-I aminoacyl-tRNA synthetase family. MetG type 1 subfamily.</text>
</comment>
<dbReference type="EC" id="6.1.1.10" evidence="2"/>
<dbReference type="EMBL" id="AL513382">
    <property type="protein sequence ID" value="CAD02534.1"/>
    <property type="molecule type" value="Genomic_DNA"/>
</dbReference>
<dbReference type="EMBL" id="AE014613">
    <property type="protein sequence ID" value="AAO68398.1"/>
    <property type="molecule type" value="Genomic_DNA"/>
</dbReference>
<dbReference type="RefSeq" id="NP_456714.1">
    <property type="nucleotide sequence ID" value="NC_003198.1"/>
</dbReference>
<dbReference type="RefSeq" id="WP_000195338.1">
    <property type="nucleotide sequence ID" value="NZ_WSUR01000002.1"/>
</dbReference>
<dbReference type="SMR" id="Q8Z5C3"/>
<dbReference type="STRING" id="220341.gene:17586289"/>
<dbReference type="KEGG" id="stt:t0701"/>
<dbReference type="KEGG" id="sty:STY2384"/>
<dbReference type="PATRIC" id="fig|220341.7.peg.2408"/>
<dbReference type="eggNOG" id="COG0073">
    <property type="taxonomic scope" value="Bacteria"/>
</dbReference>
<dbReference type="eggNOG" id="COG0143">
    <property type="taxonomic scope" value="Bacteria"/>
</dbReference>
<dbReference type="HOGENOM" id="CLU_009710_7_0_6"/>
<dbReference type="OMA" id="NMFLPDR"/>
<dbReference type="OrthoDB" id="9810191at2"/>
<dbReference type="Proteomes" id="UP000000541">
    <property type="component" value="Chromosome"/>
</dbReference>
<dbReference type="Proteomes" id="UP000002670">
    <property type="component" value="Chromosome"/>
</dbReference>
<dbReference type="GO" id="GO:0005829">
    <property type="term" value="C:cytosol"/>
    <property type="evidence" value="ECO:0007669"/>
    <property type="project" value="TreeGrafter"/>
</dbReference>
<dbReference type="GO" id="GO:0005524">
    <property type="term" value="F:ATP binding"/>
    <property type="evidence" value="ECO:0007669"/>
    <property type="project" value="UniProtKB-UniRule"/>
</dbReference>
<dbReference type="GO" id="GO:0046872">
    <property type="term" value="F:metal ion binding"/>
    <property type="evidence" value="ECO:0007669"/>
    <property type="project" value="UniProtKB-KW"/>
</dbReference>
<dbReference type="GO" id="GO:0004825">
    <property type="term" value="F:methionine-tRNA ligase activity"/>
    <property type="evidence" value="ECO:0007669"/>
    <property type="project" value="UniProtKB-UniRule"/>
</dbReference>
<dbReference type="GO" id="GO:0000049">
    <property type="term" value="F:tRNA binding"/>
    <property type="evidence" value="ECO:0007669"/>
    <property type="project" value="UniProtKB-KW"/>
</dbReference>
<dbReference type="GO" id="GO:0006431">
    <property type="term" value="P:methionyl-tRNA aminoacylation"/>
    <property type="evidence" value="ECO:0007669"/>
    <property type="project" value="UniProtKB-UniRule"/>
</dbReference>
<dbReference type="CDD" id="cd07957">
    <property type="entry name" value="Anticodon_Ia_Met"/>
    <property type="match status" value="1"/>
</dbReference>
<dbReference type="CDD" id="cd00814">
    <property type="entry name" value="MetRS_core"/>
    <property type="match status" value="1"/>
</dbReference>
<dbReference type="CDD" id="cd02800">
    <property type="entry name" value="tRNA_bind_EcMetRS_like"/>
    <property type="match status" value="1"/>
</dbReference>
<dbReference type="FunFam" id="1.10.730.10:FF:000005">
    <property type="entry name" value="Methionine--tRNA ligase"/>
    <property type="match status" value="1"/>
</dbReference>
<dbReference type="FunFam" id="2.20.28.20:FF:000001">
    <property type="entry name" value="Methionine--tRNA ligase"/>
    <property type="match status" value="1"/>
</dbReference>
<dbReference type="FunFam" id="2.40.50.140:FF:000042">
    <property type="entry name" value="Methionine--tRNA ligase"/>
    <property type="match status" value="1"/>
</dbReference>
<dbReference type="Gene3D" id="3.40.50.620">
    <property type="entry name" value="HUPs"/>
    <property type="match status" value="1"/>
</dbReference>
<dbReference type="Gene3D" id="1.10.730.10">
    <property type="entry name" value="Isoleucyl-tRNA Synthetase, Domain 1"/>
    <property type="match status" value="1"/>
</dbReference>
<dbReference type="Gene3D" id="2.20.28.20">
    <property type="entry name" value="Methionyl-tRNA synthetase, Zn-domain"/>
    <property type="match status" value="1"/>
</dbReference>
<dbReference type="Gene3D" id="2.40.50.140">
    <property type="entry name" value="Nucleic acid-binding proteins"/>
    <property type="match status" value="1"/>
</dbReference>
<dbReference type="HAMAP" id="MF_00098">
    <property type="entry name" value="Met_tRNA_synth_type1"/>
    <property type="match status" value="1"/>
</dbReference>
<dbReference type="InterPro" id="IPR001412">
    <property type="entry name" value="aa-tRNA-synth_I_CS"/>
</dbReference>
<dbReference type="InterPro" id="IPR041872">
    <property type="entry name" value="Anticodon_Met"/>
</dbReference>
<dbReference type="InterPro" id="IPR004495">
    <property type="entry name" value="Met-tRNA-synth_bsu_C"/>
</dbReference>
<dbReference type="InterPro" id="IPR023458">
    <property type="entry name" value="Met-tRNA_ligase_1"/>
</dbReference>
<dbReference type="InterPro" id="IPR014758">
    <property type="entry name" value="Met-tRNA_synth"/>
</dbReference>
<dbReference type="InterPro" id="IPR015413">
    <property type="entry name" value="Methionyl/Leucyl_tRNA_Synth"/>
</dbReference>
<dbReference type="InterPro" id="IPR033911">
    <property type="entry name" value="MetRS_core"/>
</dbReference>
<dbReference type="InterPro" id="IPR029038">
    <property type="entry name" value="MetRS_Zn"/>
</dbReference>
<dbReference type="InterPro" id="IPR012340">
    <property type="entry name" value="NA-bd_OB-fold"/>
</dbReference>
<dbReference type="InterPro" id="IPR014729">
    <property type="entry name" value="Rossmann-like_a/b/a_fold"/>
</dbReference>
<dbReference type="InterPro" id="IPR002547">
    <property type="entry name" value="tRNA-bd_dom"/>
</dbReference>
<dbReference type="InterPro" id="IPR009080">
    <property type="entry name" value="tRNAsynth_Ia_anticodon-bd"/>
</dbReference>
<dbReference type="NCBIfam" id="TIGR00398">
    <property type="entry name" value="metG"/>
    <property type="match status" value="1"/>
</dbReference>
<dbReference type="NCBIfam" id="TIGR00399">
    <property type="entry name" value="metG_C_term"/>
    <property type="match status" value="1"/>
</dbReference>
<dbReference type="NCBIfam" id="NF001100">
    <property type="entry name" value="PRK00133.1"/>
    <property type="match status" value="1"/>
</dbReference>
<dbReference type="PANTHER" id="PTHR45765">
    <property type="entry name" value="METHIONINE--TRNA LIGASE"/>
    <property type="match status" value="1"/>
</dbReference>
<dbReference type="PANTHER" id="PTHR45765:SF1">
    <property type="entry name" value="METHIONINE--TRNA LIGASE, CYTOPLASMIC"/>
    <property type="match status" value="1"/>
</dbReference>
<dbReference type="Pfam" id="PF19303">
    <property type="entry name" value="Anticodon_3"/>
    <property type="match status" value="1"/>
</dbReference>
<dbReference type="Pfam" id="PF09334">
    <property type="entry name" value="tRNA-synt_1g"/>
    <property type="match status" value="1"/>
</dbReference>
<dbReference type="Pfam" id="PF01588">
    <property type="entry name" value="tRNA_bind"/>
    <property type="match status" value="1"/>
</dbReference>
<dbReference type="PRINTS" id="PR01041">
    <property type="entry name" value="TRNASYNTHMET"/>
</dbReference>
<dbReference type="SUPFAM" id="SSF47323">
    <property type="entry name" value="Anticodon-binding domain of a subclass of class I aminoacyl-tRNA synthetases"/>
    <property type="match status" value="1"/>
</dbReference>
<dbReference type="SUPFAM" id="SSF57770">
    <property type="entry name" value="Methionyl-tRNA synthetase (MetRS), Zn-domain"/>
    <property type="match status" value="1"/>
</dbReference>
<dbReference type="SUPFAM" id="SSF50249">
    <property type="entry name" value="Nucleic acid-binding proteins"/>
    <property type="match status" value="1"/>
</dbReference>
<dbReference type="SUPFAM" id="SSF52374">
    <property type="entry name" value="Nucleotidylyl transferase"/>
    <property type="match status" value="1"/>
</dbReference>
<dbReference type="PROSITE" id="PS00178">
    <property type="entry name" value="AA_TRNA_LIGASE_I"/>
    <property type="match status" value="1"/>
</dbReference>
<dbReference type="PROSITE" id="PS50886">
    <property type="entry name" value="TRBD"/>
    <property type="match status" value="1"/>
</dbReference>
<name>SYM_SALTI</name>